<feature type="chain" id="PRO_0000364589" description="Fructose-1,6-bisphosphatase class 1">
    <location>
        <begin position="1"/>
        <end position="342"/>
    </location>
</feature>
<feature type="binding site" evidence="1">
    <location>
        <position position="97"/>
    </location>
    <ligand>
        <name>Mg(2+)</name>
        <dbReference type="ChEBI" id="CHEBI:18420"/>
        <label>1</label>
    </ligand>
</feature>
<feature type="binding site" evidence="1">
    <location>
        <position position="119"/>
    </location>
    <ligand>
        <name>Mg(2+)</name>
        <dbReference type="ChEBI" id="CHEBI:18420"/>
        <label>1</label>
    </ligand>
</feature>
<feature type="binding site" evidence="1">
    <location>
        <position position="119"/>
    </location>
    <ligand>
        <name>Mg(2+)</name>
        <dbReference type="ChEBI" id="CHEBI:18420"/>
        <label>2</label>
    </ligand>
</feature>
<feature type="binding site" evidence="1">
    <location>
        <position position="121"/>
    </location>
    <ligand>
        <name>Mg(2+)</name>
        <dbReference type="ChEBI" id="CHEBI:18420"/>
        <label>1</label>
    </ligand>
</feature>
<feature type="binding site" evidence="1">
    <location>
        <begin position="122"/>
        <end position="125"/>
    </location>
    <ligand>
        <name>substrate</name>
    </ligand>
</feature>
<feature type="binding site" evidence="1">
    <location>
        <position position="122"/>
    </location>
    <ligand>
        <name>Mg(2+)</name>
        <dbReference type="ChEBI" id="CHEBI:18420"/>
        <label>2</label>
    </ligand>
</feature>
<feature type="binding site" evidence="1">
    <location>
        <position position="215"/>
    </location>
    <ligand>
        <name>substrate</name>
    </ligand>
</feature>
<feature type="binding site" evidence="1">
    <location>
        <position position="247"/>
    </location>
    <ligand>
        <name>substrate</name>
    </ligand>
</feature>
<feature type="binding site" evidence="1">
    <location>
        <position position="280"/>
    </location>
    <ligand>
        <name>substrate</name>
    </ligand>
</feature>
<feature type="binding site" evidence="1">
    <location>
        <position position="286"/>
    </location>
    <ligand>
        <name>Mg(2+)</name>
        <dbReference type="ChEBI" id="CHEBI:18420"/>
        <label>2</label>
    </ligand>
</feature>
<reference key="1">
    <citation type="journal article" date="2004" name="J. Bacteriol.">
        <title>Comparative genomics of two Leptospira interrogans serovars reveals novel insights into physiology and pathogenesis.</title>
        <authorList>
            <person name="Nascimento A.L.T.O."/>
            <person name="Ko A.I."/>
            <person name="Martins E.A.L."/>
            <person name="Monteiro-Vitorello C.B."/>
            <person name="Ho P.L."/>
            <person name="Haake D.A."/>
            <person name="Verjovski-Almeida S."/>
            <person name="Hartskeerl R.A."/>
            <person name="Marques M.V."/>
            <person name="Oliveira M.C."/>
            <person name="Menck C.F.M."/>
            <person name="Leite L.C.C."/>
            <person name="Carrer H."/>
            <person name="Coutinho L.L."/>
            <person name="Degrave W.M."/>
            <person name="Dellagostin O.A."/>
            <person name="El-Dorry H."/>
            <person name="Ferro E.S."/>
            <person name="Ferro M.I.T."/>
            <person name="Furlan L.R."/>
            <person name="Gamberini M."/>
            <person name="Giglioti E.A."/>
            <person name="Goes-Neto A."/>
            <person name="Goldman G.H."/>
            <person name="Goldman M.H.S."/>
            <person name="Harakava R."/>
            <person name="Jeronimo S.M.B."/>
            <person name="Junqueira-de-Azevedo I.L.M."/>
            <person name="Kimura E.T."/>
            <person name="Kuramae E.E."/>
            <person name="Lemos E.G.M."/>
            <person name="Lemos M.V.F."/>
            <person name="Marino C.L."/>
            <person name="Nunes L.R."/>
            <person name="de Oliveira R.C."/>
            <person name="Pereira G.G."/>
            <person name="Reis M.S."/>
            <person name="Schriefer A."/>
            <person name="Siqueira W.J."/>
            <person name="Sommer P."/>
            <person name="Tsai S.M."/>
            <person name="Simpson A.J.G."/>
            <person name="Ferro J.A."/>
            <person name="Camargo L.E.A."/>
            <person name="Kitajima J.P."/>
            <person name="Setubal J.C."/>
            <person name="Van Sluys M.A."/>
        </authorList>
    </citation>
    <scope>NUCLEOTIDE SEQUENCE [LARGE SCALE GENOMIC DNA]</scope>
    <source>
        <strain>Fiocruz L1-130</strain>
    </source>
</reference>
<accession>Q72RN8</accession>
<keyword id="KW-0119">Carbohydrate metabolism</keyword>
<keyword id="KW-0963">Cytoplasm</keyword>
<keyword id="KW-0378">Hydrolase</keyword>
<keyword id="KW-0460">Magnesium</keyword>
<keyword id="KW-0479">Metal-binding</keyword>
<proteinExistence type="inferred from homology"/>
<comment type="catalytic activity">
    <reaction evidence="1">
        <text>beta-D-fructose 1,6-bisphosphate + H2O = beta-D-fructose 6-phosphate + phosphate</text>
        <dbReference type="Rhea" id="RHEA:11064"/>
        <dbReference type="ChEBI" id="CHEBI:15377"/>
        <dbReference type="ChEBI" id="CHEBI:32966"/>
        <dbReference type="ChEBI" id="CHEBI:43474"/>
        <dbReference type="ChEBI" id="CHEBI:57634"/>
        <dbReference type="EC" id="3.1.3.11"/>
    </reaction>
</comment>
<comment type="cofactor">
    <cofactor evidence="1">
        <name>Mg(2+)</name>
        <dbReference type="ChEBI" id="CHEBI:18420"/>
    </cofactor>
    <text evidence="1">Binds 2 magnesium ions per subunit.</text>
</comment>
<comment type="pathway">
    <text evidence="1">Carbohydrate biosynthesis; gluconeogenesis.</text>
</comment>
<comment type="subunit">
    <text evidence="1">Homotetramer.</text>
</comment>
<comment type="subcellular location">
    <subcellularLocation>
        <location evidence="1">Cytoplasm</location>
    </subcellularLocation>
</comment>
<comment type="similarity">
    <text evidence="1">Belongs to the FBPase class 1 family.</text>
</comment>
<comment type="sequence caution" evidence="2">
    <conflict type="erroneous initiation">
        <sequence resource="EMBL-CDS" id="AAS70296"/>
    </conflict>
</comment>
<dbReference type="EC" id="3.1.3.11" evidence="1"/>
<dbReference type="EMBL" id="AE016823">
    <property type="protein sequence ID" value="AAS70296.1"/>
    <property type="status" value="ALT_INIT"/>
    <property type="molecule type" value="Genomic_DNA"/>
</dbReference>
<dbReference type="RefSeq" id="WP_000110726.1">
    <property type="nucleotide sequence ID" value="NC_005823.1"/>
</dbReference>
<dbReference type="SMR" id="Q72RN8"/>
<dbReference type="GeneID" id="61141605"/>
<dbReference type="KEGG" id="lic:LIC_11707"/>
<dbReference type="HOGENOM" id="CLU_039977_2_2_12"/>
<dbReference type="UniPathway" id="UPA00138"/>
<dbReference type="Proteomes" id="UP000007037">
    <property type="component" value="Chromosome I"/>
</dbReference>
<dbReference type="GO" id="GO:0005829">
    <property type="term" value="C:cytosol"/>
    <property type="evidence" value="ECO:0007669"/>
    <property type="project" value="TreeGrafter"/>
</dbReference>
<dbReference type="GO" id="GO:0042132">
    <property type="term" value="F:fructose 1,6-bisphosphate 1-phosphatase activity"/>
    <property type="evidence" value="ECO:0007669"/>
    <property type="project" value="UniProtKB-UniRule"/>
</dbReference>
<dbReference type="GO" id="GO:0000287">
    <property type="term" value="F:magnesium ion binding"/>
    <property type="evidence" value="ECO:0007669"/>
    <property type="project" value="UniProtKB-UniRule"/>
</dbReference>
<dbReference type="GO" id="GO:0030388">
    <property type="term" value="P:fructose 1,6-bisphosphate metabolic process"/>
    <property type="evidence" value="ECO:0007669"/>
    <property type="project" value="TreeGrafter"/>
</dbReference>
<dbReference type="GO" id="GO:0006002">
    <property type="term" value="P:fructose 6-phosphate metabolic process"/>
    <property type="evidence" value="ECO:0007669"/>
    <property type="project" value="TreeGrafter"/>
</dbReference>
<dbReference type="GO" id="GO:0006000">
    <property type="term" value="P:fructose metabolic process"/>
    <property type="evidence" value="ECO:0007669"/>
    <property type="project" value="TreeGrafter"/>
</dbReference>
<dbReference type="GO" id="GO:0006094">
    <property type="term" value="P:gluconeogenesis"/>
    <property type="evidence" value="ECO:0007669"/>
    <property type="project" value="UniProtKB-UniRule"/>
</dbReference>
<dbReference type="GO" id="GO:0005986">
    <property type="term" value="P:sucrose biosynthetic process"/>
    <property type="evidence" value="ECO:0007669"/>
    <property type="project" value="TreeGrafter"/>
</dbReference>
<dbReference type="CDD" id="cd00354">
    <property type="entry name" value="FBPase"/>
    <property type="match status" value="1"/>
</dbReference>
<dbReference type="FunFam" id="3.30.540.10:FF:000002">
    <property type="entry name" value="Fructose-1,6-bisphosphatase class 1"/>
    <property type="match status" value="1"/>
</dbReference>
<dbReference type="FunFam" id="3.40.190.80:FF:000001">
    <property type="entry name" value="Fructose-1,6-bisphosphatase class 1"/>
    <property type="match status" value="1"/>
</dbReference>
<dbReference type="Gene3D" id="3.40.190.80">
    <property type="match status" value="1"/>
</dbReference>
<dbReference type="Gene3D" id="3.30.540.10">
    <property type="entry name" value="Fructose-1,6-Bisphosphatase, subunit A, domain 1"/>
    <property type="match status" value="1"/>
</dbReference>
<dbReference type="HAMAP" id="MF_01855">
    <property type="entry name" value="FBPase_class1"/>
    <property type="match status" value="1"/>
</dbReference>
<dbReference type="InterPro" id="IPR044015">
    <property type="entry name" value="FBPase_C_dom"/>
</dbReference>
<dbReference type="InterPro" id="IPR000146">
    <property type="entry name" value="FBPase_class-1"/>
</dbReference>
<dbReference type="InterPro" id="IPR033391">
    <property type="entry name" value="FBPase_N"/>
</dbReference>
<dbReference type="InterPro" id="IPR028343">
    <property type="entry name" value="FBPtase"/>
</dbReference>
<dbReference type="InterPro" id="IPR020548">
    <property type="entry name" value="Fructose_bisphosphatase_AS"/>
</dbReference>
<dbReference type="NCBIfam" id="NF006778">
    <property type="entry name" value="PRK09293.1-1"/>
    <property type="match status" value="1"/>
</dbReference>
<dbReference type="PANTHER" id="PTHR11556">
    <property type="entry name" value="FRUCTOSE-1,6-BISPHOSPHATASE-RELATED"/>
    <property type="match status" value="1"/>
</dbReference>
<dbReference type="PANTHER" id="PTHR11556:SF35">
    <property type="entry name" value="SEDOHEPTULOSE-1,7-BISPHOSPHATASE, CHLOROPLASTIC"/>
    <property type="match status" value="1"/>
</dbReference>
<dbReference type="Pfam" id="PF00316">
    <property type="entry name" value="FBPase"/>
    <property type="match status" value="1"/>
</dbReference>
<dbReference type="Pfam" id="PF18913">
    <property type="entry name" value="FBPase_C"/>
    <property type="match status" value="1"/>
</dbReference>
<dbReference type="PIRSF" id="PIRSF500210">
    <property type="entry name" value="FBPtase"/>
    <property type="match status" value="1"/>
</dbReference>
<dbReference type="PIRSF" id="PIRSF000904">
    <property type="entry name" value="FBPtase_SBPase"/>
    <property type="match status" value="1"/>
</dbReference>
<dbReference type="PRINTS" id="PR00115">
    <property type="entry name" value="F16BPHPHTASE"/>
</dbReference>
<dbReference type="SUPFAM" id="SSF56655">
    <property type="entry name" value="Carbohydrate phosphatase"/>
    <property type="match status" value="1"/>
</dbReference>
<dbReference type="PROSITE" id="PS00124">
    <property type="entry name" value="FBPASE"/>
    <property type="match status" value="1"/>
</dbReference>
<organism>
    <name type="scientific">Leptospira interrogans serogroup Icterohaemorrhagiae serovar copenhageni (strain Fiocruz L1-130)</name>
    <dbReference type="NCBI Taxonomy" id="267671"/>
    <lineage>
        <taxon>Bacteria</taxon>
        <taxon>Pseudomonadati</taxon>
        <taxon>Spirochaetota</taxon>
        <taxon>Spirochaetia</taxon>
        <taxon>Leptospirales</taxon>
        <taxon>Leptospiraceae</taxon>
        <taxon>Leptospira</taxon>
    </lineage>
</organism>
<name>F16PA_LEPIC</name>
<protein>
    <recommendedName>
        <fullName evidence="1">Fructose-1,6-bisphosphatase class 1</fullName>
        <shortName evidence="1">FBPase class 1</shortName>
        <ecNumber evidence="1">3.1.3.11</ecNumber>
    </recommendedName>
    <alternativeName>
        <fullName evidence="1">D-fructose-1,6-bisphosphate 1-phosphohydrolase class 1</fullName>
    </alternativeName>
</protein>
<sequence>MSVHPTQTLSLSQYLIEEQLKLPQATGDFTALMSHLVYAAKIVSREVRKAGLLENILGATETVNVQGETQMKLDEYADKVFNHTLTRSGHLCILGSEEHEETVPVPNGYKIGKYTIAIDPLDGSSNIDANVSIGTIFSVHLRKSPAGTPGTLSDLLQQGSGQRAAGYVLYGSSTMLILCTGKGVSGFTLDPSCGEFILSHPDMQIPETGGIYSINEGNYNYWSDEVKNYIRDIKSIEGGRKPQSGRYIGSLVADFHRNLLKGGIFLYPNDTKSTKYPNGKLRLLYEAAPMAFIAEQAGGMAVTVYGERILDLTPKELHERTTLVVGSKKEVEHFLKFAPKKS</sequence>
<gene>
    <name evidence="1" type="primary">fbp</name>
    <name type="ordered locus">LIC_11707</name>
</gene>
<evidence type="ECO:0000255" key="1">
    <source>
        <dbReference type="HAMAP-Rule" id="MF_01855"/>
    </source>
</evidence>
<evidence type="ECO:0000305" key="2"/>